<organism>
    <name type="scientific">Homo sapiens</name>
    <name type="common">Human</name>
    <dbReference type="NCBI Taxonomy" id="9606"/>
    <lineage>
        <taxon>Eukaryota</taxon>
        <taxon>Metazoa</taxon>
        <taxon>Chordata</taxon>
        <taxon>Craniata</taxon>
        <taxon>Vertebrata</taxon>
        <taxon>Euteleostomi</taxon>
        <taxon>Mammalia</taxon>
        <taxon>Eutheria</taxon>
        <taxon>Euarchontoglires</taxon>
        <taxon>Primates</taxon>
        <taxon>Haplorrhini</taxon>
        <taxon>Catarrhini</taxon>
        <taxon>Hominidae</taxon>
        <taxon>Homo</taxon>
    </lineage>
</organism>
<accession>O43930</accession>
<accession>O15348</accession>
<accession>O15349</accession>
<protein>
    <recommendedName>
        <fullName>Putative serine/threonine-protein kinase PRKY</fullName>
        <ecNumber>2.7.11.1</ecNumber>
    </recommendedName>
</protein>
<proteinExistence type="uncertain"/>
<comment type="catalytic activity">
    <reaction>
        <text>L-seryl-[protein] + ATP = O-phospho-L-seryl-[protein] + ADP + H(+)</text>
        <dbReference type="Rhea" id="RHEA:17989"/>
        <dbReference type="Rhea" id="RHEA-COMP:9863"/>
        <dbReference type="Rhea" id="RHEA-COMP:11604"/>
        <dbReference type="ChEBI" id="CHEBI:15378"/>
        <dbReference type="ChEBI" id="CHEBI:29999"/>
        <dbReference type="ChEBI" id="CHEBI:30616"/>
        <dbReference type="ChEBI" id="CHEBI:83421"/>
        <dbReference type="ChEBI" id="CHEBI:456216"/>
        <dbReference type="EC" id="2.7.11.1"/>
    </reaction>
</comment>
<comment type="catalytic activity">
    <reaction>
        <text>L-threonyl-[protein] + ATP = O-phospho-L-threonyl-[protein] + ADP + H(+)</text>
        <dbReference type="Rhea" id="RHEA:46608"/>
        <dbReference type="Rhea" id="RHEA-COMP:11060"/>
        <dbReference type="Rhea" id="RHEA-COMP:11605"/>
        <dbReference type="ChEBI" id="CHEBI:15378"/>
        <dbReference type="ChEBI" id="CHEBI:30013"/>
        <dbReference type="ChEBI" id="CHEBI:30616"/>
        <dbReference type="ChEBI" id="CHEBI:61977"/>
        <dbReference type="ChEBI" id="CHEBI:456216"/>
        <dbReference type="EC" id="2.7.11.1"/>
    </reaction>
</comment>
<comment type="tissue specificity">
    <text evidence="5">Ubiquitous.</text>
</comment>
<comment type="disease">
    <text>A chromosomal aberration involving PRKY is a cause of sex reversal disorder. Translocation t(X;Y)(p22;p11) with PRKX. Chromosomal translocations proximal to PRKY account for about 30% of the cases of sex reversal disorder in XX males and XY females.</text>
</comment>
<comment type="similarity">
    <text evidence="6">Belongs to the protein kinase superfamily. AGC Ser/Thr protein kinase family. cAMP subfamily.</text>
</comment>
<comment type="caution">
    <text evidence="6">Could be the product of a pseudogene. Highly similar to PRKX in the pseudoautosomal region of the X chromosome, the transcripts specific of that gene are potential candidates for nonsense-mediated decay.</text>
</comment>
<gene>
    <name type="primary">PRKY</name>
</gene>
<name>PRKY_HUMAN</name>
<feature type="chain" id="PRO_0000086584" description="Putative serine/threonine-protein kinase PRKY">
    <location>
        <begin position="1"/>
        <end position="277"/>
    </location>
</feature>
<feature type="domain" description="Protein kinase" evidence="2">
    <location>
        <begin position="49"/>
        <end position="277"/>
    </location>
</feature>
<feature type="region of interest" description="Disordered" evidence="4">
    <location>
        <begin position="1"/>
        <end position="40"/>
    </location>
</feature>
<feature type="compositionally biased region" description="Low complexity" evidence="4">
    <location>
        <begin position="1"/>
        <end position="12"/>
    </location>
</feature>
<feature type="active site" description="Proton acceptor" evidence="2 3">
    <location>
        <position position="172"/>
    </location>
</feature>
<feature type="binding site" evidence="2">
    <location>
        <begin position="55"/>
        <end position="63"/>
    </location>
    <ligand>
        <name>ATP</name>
        <dbReference type="ChEBI" id="CHEBI:30616"/>
    </ligand>
</feature>
<feature type="binding site" evidence="2">
    <location>
        <position position="78"/>
    </location>
    <ligand>
        <name>ATP</name>
        <dbReference type="ChEBI" id="CHEBI:30616"/>
    </ligand>
</feature>
<feature type="modified residue" description="Phosphothreonine" evidence="1">
    <location>
        <position position="203"/>
    </location>
</feature>
<feature type="sequence conflict" description="In Ref. 3; CAA71508." evidence="6" ref="3">
    <original>KT</original>
    <variation>FR</variation>
    <location>
        <begin position="69"/>
        <end position="70"/>
    </location>
</feature>
<feature type="sequence conflict" description="In Ref. 3; CAA71509." evidence="6" ref="3">
    <original>RKQ</original>
    <variation>NSG</variation>
    <location>
        <begin position="88"/>
        <end position="90"/>
    </location>
</feature>
<keyword id="KW-0067">ATP-binding</keyword>
<keyword id="KW-0160">Chromosomal rearrangement</keyword>
<keyword id="KW-0418">Kinase</keyword>
<keyword id="KW-0547">Nucleotide-binding</keyword>
<keyword id="KW-0597">Phosphoprotein</keyword>
<keyword id="KW-1185">Reference proteome</keyword>
<keyword id="KW-0723">Serine/threonine-protein kinase</keyword>
<keyword id="KW-0808">Transferase</keyword>
<evidence type="ECO:0000250" key="1">
    <source>
        <dbReference type="UniProtKB" id="Q922R0"/>
    </source>
</evidence>
<evidence type="ECO:0000255" key="2">
    <source>
        <dbReference type="PROSITE-ProRule" id="PRU00159"/>
    </source>
</evidence>
<evidence type="ECO:0000255" key="3">
    <source>
        <dbReference type="PROSITE-ProRule" id="PRU10027"/>
    </source>
</evidence>
<evidence type="ECO:0000256" key="4">
    <source>
        <dbReference type="SAM" id="MobiDB-lite"/>
    </source>
</evidence>
<evidence type="ECO:0000269" key="5">
    <source>
    </source>
</evidence>
<evidence type="ECO:0000305" key="6"/>
<reference key="1">
    <citation type="journal article" date="1997" name="Hum. Mol. Genet.">
        <title>Abnormal XY interchange between a novel isolated protein kinase gene, PRKY, and its homologue, PRKX, accounts for one third of all (Y+)XX males and (Y-)XY females.</title>
        <authorList>
            <person name="Schiebel K."/>
            <person name="Winkelmann M."/>
            <person name="Mertz A."/>
            <person name="Xu X."/>
            <person name="Page D.C."/>
            <person name="Weil D."/>
            <person name="Petit C."/>
            <person name="Rappold G.A."/>
        </authorList>
    </citation>
    <scope>NUCLEOTIDE SEQUENCE [GENOMIC DNA]</scope>
    <scope>CHROMOSOMAL TRANSLOCATION WITH PRKX</scope>
</reference>
<reference key="2">
    <citation type="journal article" date="2004" name="Genome Res.">
        <title>The status, quality, and expansion of the NIH full-length cDNA project: the Mammalian Gene Collection (MGC).</title>
        <authorList>
            <consortium name="The MGC Project Team"/>
        </authorList>
    </citation>
    <scope>NUCLEOTIDE SEQUENCE [LARGE SCALE MRNA]</scope>
    <source>
        <tissue>Lung</tissue>
    </source>
</reference>
<reference key="3">
    <citation type="journal article" date="1997" name="Cytogenet. Cell Genet.">
        <title>FISH localization of the human Y-homologue of protein kinase PRKX to Yp11.2 and two pseudogenes to 15q26 and Xq12-&gt;13.</title>
        <authorList>
            <person name="Schiebel K."/>
            <person name="Mertz A."/>
            <person name="Winkelmann M."/>
            <person name="Glaeser B."/>
            <person name="Schempp W."/>
            <person name="Rappold G."/>
        </authorList>
    </citation>
    <scope>NUCLEOTIDE SEQUENCE [MRNA] OF 68-178</scope>
    <source>
        <tissue>Fetal brain</tissue>
    </source>
</reference>
<reference key="4">
    <citation type="journal article" date="2003" name="Nature">
        <title>The male-specific region of the human Y chromosome is a mosaic of discrete sequence classes.</title>
        <authorList>
            <person name="Skaletsky H."/>
            <person name="Kuroda-Kawaguchi T."/>
            <person name="Minx P.J."/>
            <person name="Cordum H.S."/>
            <person name="Hillier L.W."/>
            <person name="Brown L.G."/>
            <person name="Repping S."/>
            <person name="Pyntikova T."/>
            <person name="Ali J."/>
            <person name="Bieri T."/>
            <person name="Chinwalla A."/>
            <person name="Delehaunty A."/>
            <person name="Delehaunty K."/>
            <person name="Du H."/>
            <person name="Fewell G."/>
            <person name="Fulton L."/>
            <person name="Fulton R."/>
            <person name="Graves T.A."/>
            <person name="Hou S.-F."/>
            <person name="Latrielle P."/>
            <person name="Leonard S."/>
            <person name="Mardis E."/>
            <person name="Maupin R."/>
            <person name="McPherson J."/>
            <person name="Miner T."/>
            <person name="Nash W."/>
            <person name="Nguyen C."/>
            <person name="Ozersky P."/>
            <person name="Pepin K."/>
            <person name="Rock S."/>
            <person name="Rohlfing T."/>
            <person name="Scott K."/>
            <person name="Schultz B."/>
            <person name="Strong C."/>
            <person name="Tin-Wollam A."/>
            <person name="Yang S.-P."/>
            <person name="Waterston R.H."/>
            <person name="Wilson R.K."/>
            <person name="Rozen S."/>
            <person name="Page D.C."/>
        </authorList>
    </citation>
    <scope>TISSUE SPECIFICITY</scope>
</reference>
<sequence length="277" mass="31708">MEAPGPAQAAAAESNSREVTEDAADWAPALCPSPEARSPEAPAYRLQDCDALVTMGTGTFGRVHLVKEKTAKHFFALKVMSIPDVIRRKQEQHVHNEKSVLKEVSHPFLIRLFWTWHEERFLYMLMEYVPGGELFSYLRNRGHFSSTTGLFYSAEIICAIEYLHSKEIVYRDLKPENILLDRDGHIKLTDFGFAKKLVDRTWTLCGTPEYLAPEVIQSKGHGRAVDWWALGILIFEMLSGFPPFFDDNPFGIYQKILAGKLYFPRHLDFHVKTGRMM</sequence>
<dbReference type="EC" id="2.7.11.1"/>
<dbReference type="EMBL" id="Y13927">
    <property type="protein sequence ID" value="CAA74244.1"/>
    <property type="molecule type" value="Genomic_DNA"/>
</dbReference>
<dbReference type="EMBL" id="Y13928">
    <property type="protein sequence ID" value="CAA74244.1"/>
    <property type="status" value="JOINED"/>
    <property type="molecule type" value="Genomic_DNA"/>
</dbReference>
<dbReference type="EMBL" id="Y13929">
    <property type="protein sequence ID" value="CAA74244.1"/>
    <property type="status" value="JOINED"/>
    <property type="molecule type" value="Genomic_DNA"/>
</dbReference>
<dbReference type="EMBL" id="Y13930">
    <property type="protein sequence ID" value="CAA74244.1"/>
    <property type="status" value="JOINED"/>
    <property type="molecule type" value="Genomic_DNA"/>
</dbReference>
<dbReference type="EMBL" id="Y13931">
    <property type="protein sequence ID" value="CAA74244.1"/>
    <property type="status" value="JOINED"/>
    <property type="molecule type" value="Genomic_DNA"/>
</dbReference>
<dbReference type="EMBL" id="Y13932">
    <property type="protein sequence ID" value="CAA74244.1"/>
    <property type="status" value="JOINED"/>
    <property type="molecule type" value="Genomic_DNA"/>
</dbReference>
<dbReference type="EMBL" id="Y15801">
    <property type="protein sequence ID" value="CAA75792.1"/>
    <property type="molecule type" value="mRNA"/>
</dbReference>
<dbReference type="EMBL" id="BC074851">
    <property type="protein sequence ID" value="AAH74851.1"/>
    <property type="molecule type" value="mRNA"/>
</dbReference>
<dbReference type="EMBL" id="BC074852">
    <property type="protein sequence ID" value="AAH74852.1"/>
    <property type="molecule type" value="mRNA"/>
</dbReference>
<dbReference type="EMBL" id="Y10484">
    <property type="protein sequence ID" value="CAA71508.1"/>
    <property type="molecule type" value="mRNA"/>
</dbReference>
<dbReference type="EMBL" id="Y10485">
    <property type="protein sequence ID" value="CAA71509.1"/>
    <property type="molecule type" value="mRNA"/>
</dbReference>
<dbReference type="SMR" id="O43930"/>
<dbReference type="FunCoup" id="O43930">
    <property type="interactions" value="368"/>
</dbReference>
<dbReference type="IntAct" id="O43930">
    <property type="interactions" value="134"/>
</dbReference>
<dbReference type="STRING" id="9606.ENSP00000498737"/>
<dbReference type="iPTMnet" id="O43930"/>
<dbReference type="PhosphoSitePlus" id="O43930"/>
<dbReference type="BioMuta" id="HGNC:9444"/>
<dbReference type="jPOST" id="O43930"/>
<dbReference type="MassIVE" id="O43930"/>
<dbReference type="PeptideAtlas" id="O43930"/>
<dbReference type="ProteomicsDB" id="49242"/>
<dbReference type="Pumba" id="O43930"/>
<dbReference type="AGR" id="HGNC:9444"/>
<dbReference type="GeneCards" id="PRKY"/>
<dbReference type="HGNC" id="HGNC:9444">
    <property type="gene designation" value="PRKY"/>
</dbReference>
<dbReference type="MIM" id="400008">
    <property type="type" value="gene"/>
</dbReference>
<dbReference type="neXtProt" id="NX_O43930"/>
<dbReference type="VEuPathDB" id="HostDB:ENSG00000099725"/>
<dbReference type="InParanoid" id="O43930"/>
<dbReference type="OMA" id="TWHDERC"/>
<dbReference type="PAN-GO" id="O43930">
    <property type="GO annotations" value="4 GO annotations based on evolutionary models"/>
</dbReference>
<dbReference type="PhylomeDB" id="O43930"/>
<dbReference type="PathwayCommons" id="O43930"/>
<dbReference type="SignaLink" id="O43930"/>
<dbReference type="ChiTaRS" id="PRKY">
    <property type="organism name" value="human"/>
</dbReference>
<dbReference type="Pharos" id="O43930">
    <property type="development level" value="Tdark"/>
</dbReference>
<dbReference type="PRO" id="PR:O43930"/>
<dbReference type="Proteomes" id="UP000005640">
    <property type="component" value="Chromosome Y"/>
</dbReference>
<dbReference type="RNAct" id="O43930">
    <property type="molecule type" value="protein"/>
</dbReference>
<dbReference type="GO" id="GO:0005952">
    <property type="term" value="C:cAMP-dependent protein kinase complex"/>
    <property type="evidence" value="ECO:0000318"/>
    <property type="project" value="GO_Central"/>
</dbReference>
<dbReference type="GO" id="GO:0005829">
    <property type="term" value="C:cytosol"/>
    <property type="evidence" value="ECO:0000318"/>
    <property type="project" value="GO_Central"/>
</dbReference>
<dbReference type="GO" id="GO:0005524">
    <property type="term" value="F:ATP binding"/>
    <property type="evidence" value="ECO:0007669"/>
    <property type="project" value="UniProtKB-KW"/>
</dbReference>
<dbReference type="GO" id="GO:0004691">
    <property type="term" value="F:cAMP-dependent protein kinase activity"/>
    <property type="evidence" value="ECO:0000318"/>
    <property type="project" value="GO_Central"/>
</dbReference>
<dbReference type="GO" id="GO:0106310">
    <property type="term" value="F:protein serine kinase activity"/>
    <property type="evidence" value="ECO:0007669"/>
    <property type="project" value="RHEA"/>
</dbReference>
<dbReference type="GO" id="GO:0004674">
    <property type="term" value="F:protein serine/threonine kinase activity"/>
    <property type="evidence" value="ECO:0000304"/>
    <property type="project" value="ProtInc"/>
</dbReference>
<dbReference type="GO" id="GO:0007155">
    <property type="term" value="P:cell adhesion"/>
    <property type="evidence" value="ECO:0000318"/>
    <property type="project" value="GO_Central"/>
</dbReference>
<dbReference type="GO" id="GO:0006468">
    <property type="term" value="P:protein phosphorylation"/>
    <property type="evidence" value="ECO:0000304"/>
    <property type="project" value="ProtInc"/>
</dbReference>
<dbReference type="GO" id="GO:0007165">
    <property type="term" value="P:signal transduction"/>
    <property type="evidence" value="ECO:0000318"/>
    <property type="project" value="GO_Central"/>
</dbReference>
<dbReference type="FunFam" id="1.10.510.10:FF:000571">
    <property type="entry name" value="Maternal embryonic leucine zipper kinase"/>
    <property type="match status" value="1"/>
</dbReference>
<dbReference type="Gene3D" id="3.30.200.20">
    <property type="entry name" value="Phosphorylase Kinase, domain 1"/>
    <property type="match status" value="1"/>
</dbReference>
<dbReference type="Gene3D" id="1.10.510.10">
    <property type="entry name" value="Transferase(Phosphotransferase) domain 1"/>
    <property type="match status" value="1"/>
</dbReference>
<dbReference type="InterPro" id="IPR011009">
    <property type="entry name" value="Kinase-like_dom_sf"/>
</dbReference>
<dbReference type="InterPro" id="IPR000719">
    <property type="entry name" value="Prot_kinase_dom"/>
</dbReference>
<dbReference type="InterPro" id="IPR008271">
    <property type="entry name" value="Ser/Thr_kinase_AS"/>
</dbReference>
<dbReference type="PANTHER" id="PTHR24353:SF133">
    <property type="entry name" value="CAMP-DEPENDENT PROTEIN KINASE CATALYTIC SUBUNIT PRKX-RELATED"/>
    <property type="match status" value="1"/>
</dbReference>
<dbReference type="PANTHER" id="PTHR24353">
    <property type="entry name" value="CYCLIC NUCLEOTIDE-DEPENDENT PROTEIN KINASE"/>
    <property type="match status" value="1"/>
</dbReference>
<dbReference type="Pfam" id="PF00069">
    <property type="entry name" value="Pkinase"/>
    <property type="match status" value="1"/>
</dbReference>
<dbReference type="SMART" id="SM00220">
    <property type="entry name" value="S_TKc"/>
    <property type="match status" value="1"/>
</dbReference>
<dbReference type="SUPFAM" id="SSF56112">
    <property type="entry name" value="Protein kinase-like (PK-like)"/>
    <property type="match status" value="1"/>
</dbReference>
<dbReference type="PROSITE" id="PS50011">
    <property type="entry name" value="PROTEIN_KINASE_DOM"/>
    <property type="match status" value="1"/>
</dbReference>
<dbReference type="PROSITE" id="PS00108">
    <property type="entry name" value="PROTEIN_KINASE_ST"/>
    <property type="match status" value="1"/>
</dbReference>